<protein>
    <recommendedName>
        <fullName evidence="1">UvrABC system protein C</fullName>
        <shortName evidence="1">Protein UvrC</shortName>
    </recommendedName>
    <alternativeName>
        <fullName evidence="1">Excinuclease ABC subunit C</fullName>
    </alternativeName>
</protein>
<dbReference type="EMBL" id="AM295007">
    <property type="protein sequence ID" value="CAM30305.1"/>
    <property type="molecule type" value="Genomic_DNA"/>
</dbReference>
<dbReference type="RefSeq" id="WP_011888904.1">
    <property type="nucleotide sequence ID" value="NC_009332.1"/>
</dbReference>
<dbReference type="SMR" id="A2REN0"/>
<dbReference type="KEGG" id="spf:SpyM50978"/>
<dbReference type="HOGENOM" id="CLU_014841_3_2_9"/>
<dbReference type="GO" id="GO:0005737">
    <property type="term" value="C:cytoplasm"/>
    <property type="evidence" value="ECO:0007669"/>
    <property type="project" value="UniProtKB-SubCell"/>
</dbReference>
<dbReference type="GO" id="GO:0009380">
    <property type="term" value="C:excinuclease repair complex"/>
    <property type="evidence" value="ECO:0007669"/>
    <property type="project" value="InterPro"/>
</dbReference>
<dbReference type="GO" id="GO:0003677">
    <property type="term" value="F:DNA binding"/>
    <property type="evidence" value="ECO:0007669"/>
    <property type="project" value="UniProtKB-UniRule"/>
</dbReference>
<dbReference type="GO" id="GO:0009381">
    <property type="term" value="F:excinuclease ABC activity"/>
    <property type="evidence" value="ECO:0007669"/>
    <property type="project" value="UniProtKB-UniRule"/>
</dbReference>
<dbReference type="GO" id="GO:0006289">
    <property type="term" value="P:nucleotide-excision repair"/>
    <property type="evidence" value="ECO:0007669"/>
    <property type="project" value="UniProtKB-UniRule"/>
</dbReference>
<dbReference type="GO" id="GO:0009432">
    <property type="term" value="P:SOS response"/>
    <property type="evidence" value="ECO:0007669"/>
    <property type="project" value="UniProtKB-UniRule"/>
</dbReference>
<dbReference type="CDD" id="cd10434">
    <property type="entry name" value="GIY-YIG_UvrC_Cho"/>
    <property type="match status" value="1"/>
</dbReference>
<dbReference type="FunFam" id="3.30.420.340:FF:000002">
    <property type="entry name" value="UvrABC system protein C"/>
    <property type="match status" value="1"/>
</dbReference>
<dbReference type="FunFam" id="3.40.1440.10:FF:000001">
    <property type="entry name" value="UvrABC system protein C"/>
    <property type="match status" value="1"/>
</dbReference>
<dbReference type="Gene3D" id="1.10.150.20">
    <property type="entry name" value="5' to 3' exonuclease, C-terminal subdomain"/>
    <property type="match status" value="1"/>
</dbReference>
<dbReference type="Gene3D" id="3.40.1440.10">
    <property type="entry name" value="GIY-YIG endonuclease"/>
    <property type="match status" value="1"/>
</dbReference>
<dbReference type="Gene3D" id="4.10.860.10">
    <property type="entry name" value="UVR domain"/>
    <property type="match status" value="1"/>
</dbReference>
<dbReference type="Gene3D" id="3.30.420.340">
    <property type="entry name" value="UvrC, RNAse H endonuclease domain"/>
    <property type="match status" value="1"/>
</dbReference>
<dbReference type="HAMAP" id="MF_00203">
    <property type="entry name" value="UvrC"/>
    <property type="match status" value="1"/>
</dbReference>
<dbReference type="InterPro" id="IPR000305">
    <property type="entry name" value="GIY-YIG_endonuc"/>
</dbReference>
<dbReference type="InterPro" id="IPR035901">
    <property type="entry name" value="GIY-YIG_endonuc_sf"/>
</dbReference>
<dbReference type="InterPro" id="IPR047296">
    <property type="entry name" value="GIY-YIG_UvrC_Cho"/>
</dbReference>
<dbReference type="InterPro" id="IPR010994">
    <property type="entry name" value="RuvA_2-like"/>
</dbReference>
<dbReference type="InterPro" id="IPR001943">
    <property type="entry name" value="UVR_dom"/>
</dbReference>
<dbReference type="InterPro" id="IPR036876">
    <property type="entry name" value="UVR_dom_sf"/>
</dbReference>
<dbReference type="InterPro" id="IPR050066">
    <property type="entry name" value="UvrABC_protein_C"/>
</dbReference>
<dbReference type="InterPro" id="IPR004791">
    <property type="entry name" value="UvrC"/>
</dbReference>
<dbReference type="InterPro" id="IPR001162">
    <property type="entry name" value="UvrC_RNase_H_dom"/>
</dbReference>
<dbReference type="InterPro" id="IPR038476">
    <property type="entry name" value="UvrC_RNase_H_dom_sf"/>
</dbReference>
<dbReference type="NCBIfam" id="TIGR00194">
    <property type="entry name" value="uvrC"/>
    <property type="match status" value="1"/>
</dbReference>
<dbReference type="PANTHER" id="PTHR30562:SF1">
    <property type="entry name" value="UVRABC SYSTEM PROTEIN C"/>
    <property type="match status" value="1"/>
</dbReference>
<dbReference type="PANTHER" id="PTHR30562">
    <property type="entry name" value="UVRC/OXIDOREDUCTASE"/>
    <property type="match status" value="1"/>
</dbReference>
<dbReference type="Pfam" id="PF01541">
    <property type="entry name" value="GIY-YIG"/>
    <property type="match status" value="1"/>
</dbReference>
<dbReference type="Pfam" id="PF14520">
    <property type="entry name" value="HHH_5"/>
    <property type="match status" value="1"/>
</dbReference>
<dbReference type="Pfam" id="PF02151">
    <property type="entry name" value="UVR"/>
    <property type="match status" value="1"/>
</dbReference>
<dbReference type="Pfam" id="PF22920">
    <property type="entry name" value="UvrC_RNaseH"/>
    <property type="match status" value="1"/>
</dbReference>
<dbReference type="Pfam" id="PF08459">
    <property type="entry name" value="UvrC_RNaseH_dom"/>
    <property type="match status" value="1"/>
</dbReference>
<dbReference type="SMART" id="SM00465">
    <property type="entry name" value="GIYc"/>
    <property type="match status" value="1"/>
</dbReference>
<dbReference type="SUPFAM" id="SSF46600">
    <property type="entry name" value="C-terminal UvrC-binding domain of UvrB"/>
    <property type="match status" value="1"/>
</dbReference>
<dbReference type="SUPFAM" id="SSF82771">
    <property type="entry name" value="GIY-YIG endonuclease"/>
    <property type="match status" value="1"/>
</dbReference>
<dbReference type="SUPFAM" id="SSF47781">
    <property type="entry name" value="RuvA domain 2-like"/>
    <property type="match status" value="1"/>
</dbReference>
<dbReference type="PROSITE" id="PS50164">
    <property type="entry name" value="GIY_YIG"/>
    <property type="match status" value="1"/>
</dbReference>
<dbReference type="PROSITE" id="PS50151">
    <property type="entry name" value="UVR"/>
    <property type="match status" value="1"/>
</dbReference>
<dbReference type="PROSITE" id="PS50165">
    <property type="entry name" value="UVRC"/>
    <property type="match status" value="1"/>
</dbReference>
<accession>A2REN0</accession>
<keyword id="KW-0963">Cytoplasm</keyword>
<keyword id="KW-0227">DNA damage</keyword>
<keyword id="KW-0228">DNA excision</keyword>
<keyword id="KW-0234">DNA repair</keyword>
<keyword id="KW-0267">Excision nuclease</keyword>
<keyword id="KW-0742">SOS response</keyword>
<gene>
    <name evidence="1" type="primary">uvrC</name>
    <name type="ordered locus">SpyM50978</name>
</gene>
<evidence type="ECO:0000255" key="1">
    <source>
        <dbReference type="HAMAP-Rule" id="MF_00203"/>
    </source>
</evidence>
<organism>
    <name type="scientific">Streptococcus pyogenes serotype M5 (strain Manfredo)</name>
    <dbReference type="NCBI Taxonomy" id="160491"/>
    <lineage>
        <taxon>Bacteria</taxon>
        <taxon>Bacillati</taxon>
        <taxon>Bacillota</taxon>
        <taxon>Bacilli</taxon>
        <taxon>Lactobacillales</taxon>
        <taxon>Streptococcaceae</taxon>
        <taxon>Streptococcus</taxon>
    </lineage>
</organism>
<proteinExistence type="inferred from homology"/>
<comment type="function">
    <text evidence="1">The UvrABC repair system catalyzes the recognition and processing of DNA lesions. UvrC both incises the 5' and 3' sides of the lesion. The N-terminal half is responsible for the 3' incision and the C-terminal half is responsible for the 5' incision.</text>
</comment>
<comment type="subunit">
    <text evidence="1">Interacts with UvrB in an incision complex.</text>
</comment>
<comment type="subcellular location">
    <subcellularLocation>
        <location evidence="1">Cytoplasm</location>
    </subcellularLocation>
</comment>
<comment type="similarity">
    <text evidence="1">Belongs to the UvrC family.</text>
</comment>
<name>UVRC_STRPG</name>
<reference key="1">
    <citation type="journal article" date="2007" name="J. Bacteriol.">
        <title>Complete genome of acute rheumatic fever-associated serotype M5 Streptococcus pyogenes strain Manfredo.</title>
        <authorList>
            <person name="Holden M.T.G."/>
            <person name="Scott A."/>
            <person name="Cherevach I."/>
            <person name="Chillingworth T."/>
            <person name="Churcher C."/>
            <person name="Cronin A."/>
            <person name="Dowd L."/>
            <person name="Feltwell T."/>
            <person name="Hamlin N."/>
            <person name="Holroyd S."/>
            <person name="Jagels K."/>
            <person name="Moule S."/>
            <person name="Mungall K."/>
            <person name="Quail M.A."/>
            <person name="Price C."/>
            <person name="Rabbinowitsch E."/>
            <person name="Sharp S."/>
            <person name="Skelton J."/>
            <person name="Whitehead S."/>
            <person name="Barrell B.G."/>
            <person name="Kehoe M."/>
            <person name="Parkhill J."/>
        </authorList>
    </citation>
    <scope>NUCLEOTIDE SEQUENCE [LARGE SCALE GENOMIC DNA]</scope>
    <source>
        <strain>Manfredo</strain>
    </source>
</reference>
<sequence length="598" mass="68827">MNELIKHKLELLPDSPGCYLHKDKEGTIIYVGKAKNLKKRVRSYFRGSHDTKTELLVSEIVDFEYIVTESDTEALLLEINLIQKNMPKYNIKLKDDKSYPFLKITNESFPRLVITRYIKKNDGLYFGPYPDSYTANEVKKLLDRIFPFKKCKNPINKVCFYYHLGQCCAHTICHTDKAYWDRLIDDVKHFLNGKDDKIIEDLRSKMLAASEEMAFERAAEYRDLISGIATMRTKQRVMSKDLQDRDIFGYYVDKGWMCVQVFFVRQGKLIQRDVNLFPYYNDAEEDFLTYMGQFYQDKQHFIPKEVFIPEAIDEELVAAIVPTKIIKPKRGEKKQLVALATKNARVSLQQKFDLLEKDIKKTSGAIDNLGHLLGINKPVRIEAFDNSNIQGTSPVAAMVVFVDGKPSKKDYRKFKIKTVVGPDDYASMREVLFRRYSRVKKEGLQAPNLIIVDGGVGQVNVAKDVIEKQLGLTIPVAGLQKNDKHQTHDLLFGNPLEVVPLPRRSEEFFLLHRIQDEVHRFAVTFHRQVRRKNSFSSTLDHISGLGPKRKQLLLRHFKTITAIASATSEEIQALGIPKTVVEAIQQQITDNKNDRSSP</sequence>
<feature type="chain" id="PRO_1000077852" description="UvrABC system protein C">
    <location>
        <begin position="1"/>
        <end position="598"/>
    </location>
</feature>
<feature type="domain" description="GIY-YIG" evidence="1">
    <location>
        <begin position="14"/>
        <end position="91"/>
    </location>
</feature>
<feature type="domain" description="UVR" evidence="1">
    <location>
        <begin position="196"/>
        <end position="231"/>
    </location>
</feature>